<evidence type="ECO:0000255" key="1">
    <source>
        <dbReference type="HAMAP-Rule" id="MF_00564"/>
    </source>
</evidence>
<gene>
    <name evidence="1" type="primary">rph</name>
    <name type="ordered locus">SCO2904</name>
    <name type="ORF">SCE19A.04c</name>
</gene>
<proteinExistence type="inferred from homology"/>
<keyword id="KW-0548">Nucleotidyltransferase</keyword>
<keyword id="KW-1185">Reference proteome</keyword>
<keyword id="KW-0694">RNA-binding</keyword>
<keyword id="KW-0698">rRNA processing</keyword>
<keyword id="KW-0808">Transferase</keyword>
<keyword id="KW-0819">tRNA processing</keyword>
<keyword id="KW-0820">tRNA-binding</keyword>
<protein>
    <recommendedName>
        <fullName evidence="1">Ribonuclease PH</fullName>
        <shortName evidence="1">RNase PH</shortName>
        <ecNumber evidence="1">2.7.7.56</ecNumber>
    </recommendedName>
    <alternativeName>
        <fullName evidence="1">tRNA nucleotidyltransferase</fullName>
    </alternativeName>
</protein>
<feature type="chain" id="PRO_0000139939" description="Ribonuclease PH">
    <location>
        <begin position="1"/>
        <end position="245"/>
    </location>
</feature>
<feature type="binding site" evidence="1">
    <location>
        <position position="87"/>
    </location>
    <ligand>
        <name>phosphate</name>
        <dbReference type="ChEBI" id="CHEBI:43474"/>
        <note>substrate</note>
    </ligand>
</feature>
<feature type="binding site" evidence="1">
    <location>
        <begin position="125"/>
        <end position="127"/>
    </location>
    <ligand>
        <name>phosphate</name>
        <dbReference type="ChEBI" id="CHEBI:43474"/>
        <note>substrate</note>
    </ligand>
</feature>
<accession>Q9S2H7</accession>
<organism>
    <name type="scientific">Streptomyces coelicolor (strain ATCC BAA-471 / A3(2) / M145)</name>
    <dbReference type="NCBI Taxonomy" id="100226"/>
    <lineage>
        <taxon>Bacteria</taxon>
        <taxon>Bacillati</taxon>
        <taxon>Actinomycetota</taxon>
        <taxon>Actinomycetes</taxon>
        <taxon>Kitasatosporales</taxon>
        <taxon>Streptomycetaceae</taxon>
        <taxon>Streptomyces</taxon>
        <taxon>Streptomyces albidoflavus group</taxon>
    </lineage>
</organism>
<sequence length="245" mass="26397">MSRIDGRTPQQLRPVTIERGWSKHAEGSVLVSFGDTKVLCNASVTEGVPRWRKGSGEGWVTAEYAMLPRATNTRGDRESVKGRIGGRTHEISRLIGRSLRAVIDYKALGENTVVLDCDVLQADGGTRTAAITGAYVALADAVAWAQGRKLIKANRKPLTGTVSAVSVGIVDGTPLLDLRYEEDVRADTDMNVVCTGDGRFVEVQGTAEAEPFARDELNTLLDLATAGCTELAELQRKALDATLER</sequence>
<reference key="1">
    <citation type="journal article" date="2002" name="Nature">
        <title>Complete genome sequence of the model actinomycete Streptomyces coelicolor A3(2).</title>
        <authorList>
            <person name="Bentley S.D."/>
            <person name="Chater K.F."/>
            <person name="Cerdeno-Tarraga A.-M."/>
            <person name="Challis G.L."/>
            <person name="Thomson N.R."/>
            <person name="James K.D."/>
            <person name="Harris D.E."/>
            <person name="Quail M.A."/>
            <person name="Kieser H."/>
            <person name="Harper D."/>
            <person name="Bateman A."/>
            <person name="Brown S."/>
            <person name="Chandra G."/>
            <person name="Chen C.W."/>
            <person name="Collins M."/>
            <person name="Cronin A."/>
            <person name="Fraser A."/>
            <person name="Goble A."/>
            <person name="Hidalgo J."/>
            <person name="Hornsby T."/>
            <person name="Howarth S."/>
            <person name="Huang C.-H."/>
            <person name="Kieser T."/>
            <person name="Larke L."/>
            <person name="Murphy L.D."/>
            <person name="Oliver K."/>
            <person name="O'Neil S."/>
            <person name="Rabbinowitsch E."/>
            <person name="Rajandream M.A."/>
            <person name="Rutherford K.M."/>
            <person name="Rutter S."/>
            <person name="Seeger K."/>
            <person name="Saunders D."/>
            <person name="Sharp S."/>
            <person name="Squares R."/>
            <person name="Squares S."/>
            <person name="Taylor K."/>
            <person name="Warren T."/>
            <person name="Wietzorrek A."/>
            <person name="Woodward J.R."/>
            <person name="Barrell B.G."/>
            <person name="Parkhill J."/>
            <person name="Hopwood D.A."/>
        </authorList>
    </citation>
    <scope>NUCLEOTIDE SEQUENCE [LARGE SCALE GENOMIC DNA]</scope>
    <source>
        <strain>ATCC BAA-471 / A3(2) / M145</strain>
    </source>
</reference>
<name>RNPH_STRCO</name>
<dbReference type="EC" id="2.7.7.56" evidence="1"/>
<dbReference type="EMBL" id="AL939114">
    <property type="protein sequence ID" value="CAB50985.1"/>
    <property type="molecule type" value="Genomic_DNA"/>
</dbReference>
<dbReference type="PIR" id="T36127">
    <property type="entry name" value="T36127"/>
</dbReference>
<dbReference type="RefSeq" id="NP_627130.1">
    <property type="nucleotide sequence ID" value="NC_003888.3"/>
</dbReference>
<dbReference type="RefSeq" id="WP_003975906.1">
    <property type="nucleotide sequence ID" value="NZ_VNID01000010.1"/>
</dbReference>
<dbReference type="SMR" id="Q9S2H7"/>
<dbReference type="FunCoup" id="Q9S2H7">
    <property type="interactions" value="263"/>
</dbReference>
<dbReference type="STRING" id="100226.gene:17760515"/>
<dbReference type="PaxDb" id="100226-SCO2904"/>
<dbReference type="GeneID" id="91386091"/>
<dbReference type="KEGG" id="sco:SCO2904"/>
<dbReference type="PATRIC" id="fig|100226.15.peg.2963"/>
<dbReference type="eggNOG" id="COG0689">
    <property type="taxonomic scope" value="Bacteria"/>
</dbReference>
<dbReference type="HOGENOM" id="CLU_050858_0_0_11"/>
<dbReference type="InParanoid" id="Q9S2H7"/>
<dbReference type="OrthoDB" id="9802265at2"/>
<dbReference type="PhylomeDB" id="Q9S2H7"/>
<dbReference type="Proteomes" id="UP000001973">
    <property type="component" value="Chromosome"/>
</dbReference>
<dbReference type="GO" id="GO:0000175">
    <property type="term" value="F:3'-5'-RNA exonuclease activity"/>
    <property type="evidence" value="ECO:0007669"/>
    <property type="project" value="UniProtKB-UniRule"/>
</dbReference>
<dbReference type="GO" id="GO:0003723">
    <property type="term" value="F:RNA binding"/>
    <property type="evidence" value="ECO:0000318"/>
    <property type="project" value="GO_Central"/>
</dbReference>
<dbReference type="GO" id="GO:0000049">
    <property type="term" value="F:tRNA binding"/>
    <property type="evidence" value="ECO:0007669"/>
    <property type="project" value="UniProtKB-UniRule"/>
</dbReference>
<dbReference type="GO" id="GO:0009022">
    <property type="term" value="F:tRNA nucleotidyltransferase activity"/>
    <property type="evidence" value="ECO:0007669"/>
    <property type="project" value="UniProtKB-UniRule"/>
</dbReference>
<dbReference type="GO" id="GO:0016075">
    <property type="term" value="P:rRNA catabolic process"/>
    <property type="evidence" value="ECO:0000318"/>
    <property type="project" value="GO_Central"/>
</dbReference>
<dbReference type="GO" id="GO:0006364">
    <property type="term" value="P:rRNA processing"/>
    <property type="evidence" value="ECO:0007669"/>
    <property type="project" value="UniProtKB-KW"/>
</dbReference>
<dbReference type="GO" id="GO:0008033">
    <property type="term" value="P:tRNA processing"/>
    <property type="evidence" value="ECO:0007669"/>
    <property type="project" value="UniProtKB-UniRule"/>
</dbReference>
<dbReference type="CDD" id="cd11362">
    <property type="entry name" value="RNase_PH_bact"/>
    <property type="match status" value="1"/>
</dbReference>
<dbReference type="FunFam" id="3.30.230.70:FF:000003">
    <property type="entry name" value="Ribonuclease PH"/>
    <property type="match status" value="1"/>
</dbReference>
<dbReference type="Gene3D" id="3.30.230.70">
    <property type="entry name" value="GHMP Kinase, N-terminal domain"/>
    <property type="match status" value="1"/>
</dbReference>
<dbReference type="HAMAP" id="MF_00564">
    <property type="entry name" value="RNase_PH"/>
    <property type="match status" value="1"/>
</dbReference>
<dbReference type="InterPro" id="IPR001247">
    <property type="entry name" value="ExoRNase_PH_dom1"/>
</dbReference>
<dbReference type="InterPro" id="IPR015847">
    <property type="entry name" value="ExoRNase_PH_dom2"/>
</dbReference>
<dbReference type="InterPro" id="IPR036345">
    <property type="entry name" value="ExoRNase_PH_dom2_sf"/>
</dbReference>
<dbReference type="InterPro" id="IPR027408">
    <property type="entry name" value="PNPase/RNase_PH_dom_sf"/>
</dbReference>
<dbReference type="InterPro" id="IPR020568">
    <property type="entry name" value="Ribosomal_Su5_D2-typ_SF"/>
</dbReference>
<dbReference type="InterPro" id="IPR050080">
    <property type="entry name" value="RNase_PH"/>
</dbReference>
<dbReference type="InterPro" id="IPR002381">
    <property type="entry name" value="RNase_PH_bac-type"/>
</dbReference>
<dbReference type="InterPro" id="IPR018336">
    <property type="entry name" value="RNase_PH_CS"/>
</dbReference>
<dbReference type="NCBIfam" id="TIGR01966">
    <property type="entry name" value="RNasePH"/>
    <property type="match status" value="1"/>
</dbReference>
<dbReference type="PANTHER" id="PTHR11953">
    <property type="entry name" value="EXOSOME COMPLEX COMPONENT"/>
    <property type="match status" value="1"/>
</dbReference>
<dbReference type="PANTHER" id="PTHR11953:SF0">
    <property type="entry name" value="EXOSOME COMPLEX COMPONENT RRP41"/>
    <property type="match status" value="1"/>
</dbReference>
<dbReference type="Pfam" id="PF01138">
    <property type="entry name" value="RNase_PH"/>
    <property type="match status" value="1"/>
</dbReference>
<dbReference type="Pfam" id="PF03725">
    <property type="entry name" value="RNase_PH_C"/>
    <property type="match status" value="1"/>
</dbReference>
<dbReference type="SUPFAM" id="SSF55666">
    <property type="entry name" value="Ribonuclease PH domain 2-like"/>
    <property type="match status" value="1"/>
</dbReference>
<dbReference type="SUPFAM" id="SSF54211">
    <property type="entry name" value="Ribosomal protein S5 domain 2-like"/>
    <property type="match status" value="1"/>
</dbReference>
<dbReference type="PROSITE" id="PS01277">
    <property type="entry name" value="RIBONUCLEASE_PH"/>
    <property type="match status" value="1"/>
</dbReference>
<comment type="function">
    <text evidence="1">Phosphorolytic 3'-5' exoribonuclease that plays an important role in tRNA 3'-end maturation. Removes nucleotide residues following the 3'-CCA terminus of tRNAs; can also add nucleotides to the ends of RNA molecules by using nucleoside diphosphates as substrates, but this may not be physiologically important. Probably plays a role in initiation of 16S rRNA degradation (leading to ribosome degradation) during starvation.</text>
</comment>
<comment type="catalytic activity">
    <reaction evidence="1">
        <text>tRNA(n+1) + phosphate = tRNA(n) + a ribonucleoside 5'-diphosphate</text>
        <dbReference type="Rhea" id="RHEA:10628"/>
        <dbReference type="Rhea" id="RHEA-COMP:17343"/>
        <dbReference type="Rhea" id="RHEA-COMP:17344"/>
        <dbReference type="ChEBI" id="CHEBI:43474"/>
        <dbReference type="ChEBI" id="CHEBI:57930"/>
        <dbReference type="ChEBI" id="CHEBI:173114"/>
        <dbReference type="EC" id="2.7.7.56"/>
    </reaction>
</comment>
<comment type="subunit">
    <text evidence="1">Homohexameric ring arranged as a trimer of dimers.</text>
</comment>
<comment type="similarity">
    <text evidence="1">Belongs to the RNase PH family.</text>
</comment>